<comment type="subunit">
    <text evidence="1">Homodimer and heterodimers.</text>
</comment>
<comment type="subcellular location">
    <subcellularLocation>
        <location evidence="1">Cell membrane</location>
        <topology evidence="1">Multi-pass membrane protein</topology>
    </subcellularLocation>
</comment>
<comment type="similarity">
    <text evidence="4">Belongs to the Casparian strip membrane proteins (CASP) family.</text>
</comment>
<sequence length="197" mass="21558">MDDFDPTVTNSPKFRLIAVQCLFSITAFAAMLSQRHGLAGPDEMTLEECGPQACGYQKFSNFKFLIAVCIIYAVFSLVVMAAYLLQRVPPPVTELTAYTVMNVLLFAAFAMSATSCNITIVDPVYPVCKRATSAKASIAFAFFTWLAVCFSMLFTYKEWRDVDYHVPGSGAYEFVPGVTSGSSRSSYPPQASSSSYA</sequence>
<evidence type="ECO:0000250" key="1"/>
<evidence type="ECO:0000255" key="2"/>
<evidence type="ECO:0000256" key="3">
    <source>
        <dbReference type="SAM" id="MobiDB-lite"/>
    </source>
</evidence>
<evidence type="ECO:0000305" key="4"/>
<feature type="chain" id="PRO_0000417784" description="CASP-like protein 0U1">
    <location>
        <begin position="1"/>
        <end position="197"/>
    </location>
</feature>
<feature type="topological domain" description="Cytoplasmic" evidence="2">
    <location>
        <begin position="1"/>
        <end position="13"/>
    </location>
</feature>
<feature type="transmembrane region" description="Helical" evidence="2">
    <location>
        <begin position="14"/>
        <end position="34"/>
    </location>
</feature>
<feature type="topological domain" description="Extracellular" evidence="2">
    <location>
        <begin position="35"/>
        <end position="63"/>
    </location>
</feature>
<feature type="transmembrane region" description="Helical" evidence="2">
    <location>
        <begin position="64"/>
        <end position="84"/>
    </location>
</feature>
<feature type="topological domain" description="Cytoplasmic" evidence="2">
    <location>
        <begin position="85"/>
        <end position="99"/>
    </location>
</feature>
<feature type="transmembrane region" description="Helical" evidence="2">
    <location>
        <begin position="100"/>
        <end position="120"/>
    </location>
</feature>
<feature type="topological domain" description="Extracellular" evidence="2">
    <location>
        <begin position="121"/>
        <end position="135"/>
    </location>
</feature>
<feature type="transmembrane region" description="Helical" evidence="2">
    <location>
        <begin position="136"/>
        <end position="156"/>
    </location>
</feature>
<feature type="topological domain" description="Cytoplasmic" evidence="2">
    <location>
        <begin position="157"/>
        <end position="197"/>
    </location>
</feature>
<feature type="region of interest" description="Disordered" evidence="3">
    <location>
        <begin position="178"/>
        <end position="197"/>
    </location>
</feature>
<feature type="compositionally biased region" description="Low complexity" evidence="3">
    <location>
        <begin position="180"/>
        <end position="197"/>
    </location>
</feature>
<gene>
    <name type="ORF">MICPUN_64436</name>
</gene>
<proteinExistence type="inferred from homology"/>
<dbReference type="EMBL" id="CP001333">
    <property type="protein sequence ID" value="ACO67787.1"/>
    <property type="molecule type" value="Genomic_DNA"/>
</dbReference>
<dbReference type="RefSeq" id="XP_002506529.1">
    <property type="nucleotide sequence ID" value="XM_002506483.1"/>
</dbReference>
<dbReference type="SMR" id="C1EI34"/>
<dbReference type="GeneID" id="8249460"/>
<dbReference type="KEGG" id="mis:MICPUN_64436"/>
<dbReference type="InParanoid" id="C1EI34"/>
<dbReference type="OMA" id="FYQFKGV"/>
<dbReference type="OrthoDB" id="10421187at2759"/>
<dbReference type="Proteomes" id="UP000002009">
    <property type="component" value="Chromosome 15"/>
</dbReference>
<dbReference type="GO" id="GO:0005886">
    <property type="term" value="C:plasma membrane"/>
    <property type="evidence" value="ECO:0007669"/>
    <property type="project" value="UniProtKB-SubCell"/>
</dbReference>
<dbReference type="InterPro" id="IPR008253">
    <property type="entry name" value="Marvel"/>
</dbReference>
<dbReference type="Pfam" id="PF01284">
    <property type="entry name" value="MARVEL"/>
    <property type="match status" value="1"/>
</dbReference>
<keyword id="KW-1003">Cell membrane</keyword>
<keyword id="KW-0472">Membrane</keyword>
<keyword id="KW-1185">Reference proteome</keyword>
<keyword id="KW-0812">Transmembrane</keyword>
<keyword id="KW-1133">Transmembrane helix</keyword>
<reference key="1">
    <citation type="journal article" date="2009" name="Science">
        <title>Green evolution and dynamic adaptations revealed by genomes of the marine picoeukaryotes Micromonas.</title>
        <authorList>
            <person name="Worden A.Z."/>
            <person name="Lee J.H."/>
            <person name="Mock T."/>
            <person name="Rouze P."/>
            <person name="Simmons M.P."/>
            <person name="Aerts A.L."/>
            <person name="Allen A.E."/>
            <person name="Cuvelier M.L."/>
            <person name="Derelle E."/>
            <person name="Everett M.V."/>
            <person name="Foulon E."/>
            <person name="Grimwood J."/>
            <person name="Gundlach H."/>
            <person name="Henrissat B."/>
            <person name="Napoli C."/>
            <person name="McDonald S.M."/>
            <person name="Parker M.S."/>
            <person name="Rombauts S."/>
            <person name="Salamov A."/>
            <person name="Von Dassow P."/>
            <person name="Badger J.H."/>
            <person name="Coutinho P.M."/>
            <person name="Demir E."/>
            <person name="Dubchak I."/>
            <person name="Gentemann C."/>
            <person name="Eikrem W."/>
            <person name="Gready J.E."/>
            <person name="John U."/>
            <person name="Lanier W."/>
            <person name="Lindquist E.A."/>
            <person name="Lucas S."/>
            <person name="Mayer K.F."/>
            <person name="Moreau H."/>
            <person name="Not F."/>
            <person name="Otillar R."/>
            <person name="Panaud O."/>
            <person name="Pangilinan J."/>
            <person name="Paulsen I."/>
            <person name="Piegu B."/>
            <person name="Poliakov A."/>
            <person name="Robbens S."/>
            <person name="Schmutz J."/>
            <person name="Toulza E."/>
            <person name="Wyss T."/>
            <person name="Zelensky A."/>
            <person name="Zhou K."/>
            <person name="Armbrust E.V."/>
            <person name="Bhattacharya D."/>
            <person name="Goodenough U.W."/>
            <person name="Van de Peer Y."/>
            <person name="Grigoriev I.V."/>
        </authorList>
    </citation>
    <scope>NUCLEOTIDE SEQUENCE [LARGE SCALE GENOMIC DNA]</scope>
    <source>
        <strain>RCC299 / NOUM17</strain>
    </source>
</reference>
<reference key="2">
    <citation type="journal article" date="2014" name="Plant Physiol.">
        <title>Functional and evolutionary analysis of the CASPARIAN STRIP MEMBRANE DOMAIN PROTEIN family.</title>
        <authorList>
            <person name="Roppolo D."/>
            <person name="Boeckmann B."/>
            <person name="Pfister A."/>
            <person name="Boutet E."/>
            <person name="Rubio M.C."/>
            <person name="Denervaud-Tendon V."/>
            <person name="Vermeer J.E."/>
            <person name="Gheyselinck J."/>
            <person name="Xenarios I."/>
            <person name="Geldner N."/>
        </authorList>
    </citation>
    <scope>GENE FAMILY</scope>
    <scope>NOMENCLATURE</scope>
</reference>
<protein>
    <recommendedName>
        <fullName>CASP-like protein 0U1</fullName>
        <shortName>CASPL0U1</shortName>
    </recommendedName>
</protein>
<name>CSPL1_MICCC</name>
<organism>
    <name type="scientific">Micromonas commoda (strain RCC299 / NOUM17 / CCMP2709)</name>
    <name type="common">Picoplanktonic green alga</name>
    <dbReference type="NCBI Taxonomy" id="296587"/>
    <lineage>
        <taxon>Eukaryota</taxon>
        <taxon>Viridiplantae</taxon>
        <taxon>Chlorophyta</taxon>
        <taxon>Mamiellophyceae</taxon>
        <taxon>Mamiellales</taxon>
        <taxon>Mamiellaceae</taxon>
        <taxon>Micromonas</taxon>
    </lineage>
</organism>
<accession>C1EI34</accession>